<name>RL23_TRIL1</name>
<sequence>MNIYSIIKKPHVTEKTSLGTEAANTITLVVDRDSNKIEIKKAVESLFKVNVTSVRTVNVAGKVKRFGRNYGKRQNWKKAYITLKEGQTVDFFEV</sequence>
<protein>
    <recommendedName>
        <fullName evidence="1">Large ribosomal subunit protein uL23</fullName>
    </recommendedName>
    <alternativeName>
        <fullName evidence="2">50S ribosomal protein L23</fullName>
    </alternativeName>
</protein>
<evidence type="ECO:0000255" key="1">
    <source>
        <dbReference type="HAMAP-Rule" id="MF_01369"/>
    </source>
</evidence>
<evidence type="ECO:0000305" key="2"/>
<dbReference type="EMBL" id="CP001089">
    <property type="protein sequence ID" value="ACD95069.1"/>
    <property type="molecule type" value="Genomic_DNA"/>
</dbReference>
<dbReference type="RefSeq" id="WP_012469414.1">
    <property type="nucleotide sequence ID" value="NC_010814.1"/>
</dbReference>
<dbReference type="SMR" id="B3E7T7"/>
<dbReference type="STRING" id="398767.Glov_1348"/>
<dbReference type="KEGG" id="glo:Glov_1348"/>
<dbReference type="eggNOG" id="COG0089">
    <property type="taxonomic scope" value="Bacteria"/>
</dbReference>
<dbReference type="HOGENOM" id="CLU_037562_3_1_7"/>
<dbReference type="OrthoDB" id="9793353at2"/>
<dbReference type="Proteomes" id="UP000002420">
    <property type="component" value="Chromosome"/>
</dbReference>
<dbReference type="GO" id="GO:1990904">
    <property type="term" value="C:ribonucleoprotein complex"/>
    <property type="evidence" value="ECO:0007669"/>
    <property type="project" value="UniProtKB-KW"/>
</dbReference>
<dbReference type="GO" id="GO:0005840">
    <property type="term" value="C:ribosome"/>
    <property type="evidence" value="ECO:0007669"/>
    <property type="project" value="UniProtKB-KW"/>
</dbReference>
<dbReference type="GO" id="GO:0019843">
    <property type="term" value="F:rRNA binding"/>
    <property type="evidence" value="ECO:0007669"/>
    <property type="project" value="UniProtKB-UniRule"/>
</dbReference>
<dbReference type="GO" id="GO:0003735">
    <property type="term" value="F:structural constituent of ribosome"/>
    <property type="evidence" value="ECO:0007669"/>
    <property type="project" value="InterPro"/>
</dbReference>
<dbReference type="GO" id="GO:0006412">
    <property type="term" value="P:translation"/>
    <property type="evidence" value="ECO:0007669"/>
    <property type="project" value="UniProtKB-UniRule"/>
</dbReference>
<dbReference type="FunFam" id="3.30.70.330:FF:000001">
    <property type="entry name" value="50S ribosomal protein L23"/>
    <property type="match status" value="1"/>
</dbReference>
<dbReference type="Gene3D" id="3.30.70.330">
    <property type="match status" value="1"/>
</dbReference>
<dbReference type="HAMAP" id="MF_01369_B">
    <property type="entry name" value="Ribosomal_uL23_B"/>
    <property type="match status" value="1"/>
</dbReference>
<dbReference type="InterPro" id="IPR012677">
    <property type="entry name" value="Nucleotide-bd_a/b_plait_sf"/>
</dbReference>
<dbReference type="InterPro" id="IPR013025">
    <property type="entry name" value="Ribosomal_uL23-like"/>
</dbReference>
<dbReference type="InterPro" id="IPR012678">
    <property type="entry name" value="Ribosomal_uL23/eL15/eS24_sf"/>
</dbReference>
<dbReference type="InterPro" id="IPR001014">
    <property type="entry name" value="Ribosomal_uL23_CS"/>
</dbReference>
<dbReference type="NCBIfam" id="NF004359">
    <property type="entry name" value="PRK05738.1-3"/>
    <property type="match status" value="1"/>
</dbReference>
<dbReference type="NCBIfam" id="NF004363">
    <property type="entry name" value="PRK05738.2-4"/>
    <property type="match status" value="1"/>
</dbReference>
<dbReference type="NCBIfam" id="NF004366">
    <property type="entry name" value="PRK05738.3-2"/>
    <property type="match status" value="1"/>
</dbReference>
<dbReference type="PANTHER" id="PTHR11620">
    <property type="entry name" value="60S RIBOSOMAL PROTEIN L23A"/>
    <property type="match status" value="1"/>
</dbReference>
<dbReference type="Pfam" id="PF00276">
    <property type="entry name" value="Ribosomal_L23"/>
    <property type="match status" value="1"/>
</dbReference>
<dbReference type="SUPFAM" id="SSF54189">
    <property type="entry name" value="Ribosomal proteins S24e, L23 and L15e"/>
    <property type="match status" value="1"/>
</dbReference>
<dbReference type="PROSITE" id="PS00050">
    <property type="entry name" value="RIBOSOMAL_L23"/>
    <property type="match status" value="1"/>
</dbReference>
<proteinExistence type="inferred from homology"/>
<comment type="function">
    <text evidence="1">One of the early assembly proteins it binds 23S rRNA. One of the proteins that surrounds the polypeptide exit tunnel on the outside of the ribosome. Forms the main docking site for trigger factor binding to the ribosome.</text>
</comment>
<comment type="subunit">
    <text evidence="1">Part of the 50S ribosomal subunit. Contacts protein L29, and trigger factor when it is bound to the ribosome.</text>
</comment>
<comment type="similarity">
    <text evidence="1">Belongs to the universal ribosomal protein uL23 family.</text>
</comment>
<feature type="chain" id="PRO_1000144570" description="Large ribosomal subunit protein uL23">
    <location>
        <begin position="1"/>
        <end position="94"/>
    </location>
</feature>
<organism>
    <name type="scientific">Trichlorobacter lovleyi (strain ATCC BAA-1151 / DSM 17278 / SZ)</name>
    <name type="common">Geobacter lovleyi</name>
    <dbReference type="NCBI Taxonomy" id="398767"/>
    <lineage>
        <taxon>Bacteria</taxon>
        <taxon>Pseudomonadati</taxon>
        <taxon>Thermodesulfobacteriota</taxon>
        <taxon>Desulfuromonadia</taxon>
        <taxon>Geobacterales</taxon>
        <taxon>Geobacteraceae</taxon>
        <taxon>Trichlorobacter</taxon>
    </lineage>
</organism>
<accession>B3E7T7</accession>
<gene>
    <name evidence="1" type="primary">rplW</name>
    <name type="ordered locus">Glov_1348</name>
</gene>
<keyword id="KW-1185">Reference proteome</keyword>
<keyword id="KW-0687">Ribonucleoprotein</keyword>
<keyword id="KW-0689">Ribosomal protein</keyword>
<keyword id="KW-0694">RNA-binding</keyword>
<keyword id="KW-0699">rRNA-binding</keyword>
<reference key="1">
    <citation type="submission" date="2008-05" db="EMBL/GenBank/DDBJ databases">
        <title>Complete sequence of chromosome of Geobacter lovleyi SZ.</title>
        <authorList>
            <consortium name="US DOE Joint Genome Institute"/>
            <person name="Lucas S."/>
            <person name="Copeland A."/>
            <person name="Lapidus A."/>
            <person name="Glavina del Rio T."/>
            <person name="Dalin E."/>
            <person name="Tice H."/>
            <person name="Bruce D."/>
            <person name="Goodwin L."/>
            <person name="Pitluck S."/>
            <person name="Chertkov O."/>
            <person name="Meincke L."/>
            <person name="Brettin T."/>
            <person name="Detter J.C."/>
            <person name="Han C."/>
            <person name="Tapia R."/>
            <person name="Kuske C.R."/>
            <person name="Schmutz J."/>
            <person name="Larimer F."/>
            <person name="Land M."/>
            <person name="Hauser L."/>
            <person name="Kyrpides N."/>
            <person name="Mikhailova N."/>
            <person name="Sung Y."/>
            <person name="Fletcher K.E."/>
            <person name="Ritalahti K.M."/>
            <person name="Loeffler F.E."/>
            <person name="Richardson P."/>
        </authorList>
    </citation>
    <scope>NUCLEOTIDE SEQUENCE [LARGE SCALE GENOMIC DNA]</scope>
    <source>
        <strain>ATCC BAA-1151 / DSM 17278 / SZ</strain>
    </source>
</reference>